<name>COXX_PROM9</name>
<feature type="chain" id="PRO_0000327117" description="Protoheme IX farnesyltransferase">
    <location>
        <begin position="1"/>
        <end position="333"/>
    </location>
</feature>
<feature type="transmembrane region" description="Helical" evidence="1">
    <location>
        <begin position="64"/>
        <end position="84"/>
    </location>
</feature>
<feature type="transmembrane region" description="Helical" evidence="1">
    <location>
        <begin position="110"/>
        <end position="130"/>
    </location>
</feature>
<feature type="transmembrane region" description="Helical" evidence="1">
    <location>
        <begin position="133"/>
        <end position="153"/>
    </location>
</feature>
<feature type="transmembrane region" description="Helical" evidence="1">
    <location>
        <begin position="161"/>
        <end position="181"/>
    </location>
</feature>
<feature type="transmembrane region" description="Helical" evidence="1">
    <location>
        <begin position="189"/>
        <end position="209"/>
    </location>
</feature>
<feature type="transmembrane region" description="Helical" evidence="1">
    <location>
        <begin position="246"/>
        <end position="266"/>
    </location>
</feature>
<feature type="transmembrane region" description="Helical" evidence="1">
    <location>
        <begin position="287"/>
        <end position="307"/>
    </location>
</feature>
<protein>
    <recommendedName>
        <fullName evidence="1">Protoheme IX farnesyltransferase</fullName>
        <ecNumber evidence="1">2.5.1.141</ecNumber>
    </recommendedName>
    <alternativeName>
        <fullName evidence="1">Heme B farnesyltransferase</fullName>
    </alternativeName>
    <alternativeName>
        <fullName evidence="1">Heme O synthase</fullName>
    </alternativeName>
</protein>
<comment type="function">
    <text evidence="1">Converts heme B (protoheme IX) to heme O by substitution of the vinyl group on carbon 2 of heme B porphyrin ring with a hydroxyethyl farnesyl side group.</text>
</comment>
<comment type="catalytic activity">
    <reaction evidence="1">
        <text>heme b + (2E,6E)-farnesyl diphosphate + H2O = Fe(II)-heme o + diphosphate</text>
        <dbReference type="Rhea" id="RHEA:28070"/>
        <dbReference type="ChEBI" id="CHEBI:15377"/>
        <dbReference type="ChEBI" id="CHEBI:33019"/>
        <dbReference type="ChEBI" id="CHEBI:60344"/>
        <dbReference type="ChEBI" id="CHEBI:60530"/>
        <dbReference type="ChEBI" id="CHEBI:175763"/>
        <dbReference type="EC" id="2.5.1.141"/>
    </reaction>
</comment>
<comment type="pathway">
    <text evidence="1">Porphyrin-containing compound metabolism; heme O biosynthesis; heme O from protoheme: step 1/1.</text>
</comment>
<comment type="subcellular location">
    <subcellularLocation>
        <location evidence="1">Cell inner membrane</location>
        <topology evidence="1">Multi-pass membrane protein</topology>
    </subcellularLocation>
</comment>
<comment type="miscellaneous">
    <text evidence="1">Carbon 2 of the heme B porphyrin ring is defined according to the Fischer nomenclature.</text>
</comment>
<comment type="similarity">
    <text evidence="1">Belongs to the UbiA prenyltransferase family. Protoheme IX farnesyltransferase subfamily.</text>
</comment>
<sequence length="333" mass="35998">MNSSNLENFNYKSSIRDEVVPSRKRLTLPPWLEVAKPRLIPLLLATTLGGMALTEEWPLSSPKLICTLGGGALAAAAAGALNCLWEMELDKRMIRTSKRALPSGKLSSETVFLAAVSCTLAASMLLISGVNYLAAGLTLLGLCSYVILYTVILKPRTTKNIVFGGVAGAIPPLVGASAATGHVGLSGWWLFGLVMLWTPAHFWALAILLKDDYASVGIPMLPSVKGSLFTAKAISRYGLATVLMSIMGVFALPEGGLLYGIMLLPFNGRLLQLINKLKKSPDDLLRAKSLFRWSILYMFGICLLLLISRTQLSVEFEQQSMQIFFSIGSLLSN</sequence>
<accession>Q31C87</accession>
<dbReference type="EC" id="2.5.1.141" evidence="1"/>
<dbReference type="EMBL" id="CP000111">
    <property type="protein sequence ID" value="ABB49508.1"/>
    <property type="molecule type" value="Genomic_DNA"/>
</dbReference>
<dbReference type="RefSeq" id="WP_011376007.1">
    <property type="nucleotide sequence ID" value="NC_007577.1"/>
</dbReference>
<dbReference type="SMR" id="Q31C87"/>
<dbReference type="STRING" id="74546.PMT9312_0447"/>
<dbReference type="KEGG" id="pmi:PMT9312_0447"/>
<dbReference type="eggNOG" id="COG0109">
    <property type="taxonomic scope" value="Bacteria"/>
</dbReference>
<dbReference type="HOGENOM" id="CLU_029631_0_2_3"/>
<dbReference type="OrthoDB" id="9814417at2"/>
<dbReference type="UniPathway" id="UPA00834">
    <property type="reaction ID" value="UER00712"/>
</dbReference>
<dbReference type="Proteomes" id="UP000002715">
    <property type="component" value="Chromosome"/>
</dbReference>
<dbReference type="GO" id="GO:0005886">
    <property type="term" value="C:plasma membrane"/>
    <property type="evidence" value="ECO:0007669"/>
    <property type="project" value="UniProtKB-SubCell"/>
</dbReference>
<dbReference type="GO" id="GO:0008495">
    <property type="term" value="F:protoheme IX farnesyltransferase activity"/>
    <property type="evidence" value="ECO:0007669"/>
    <property type="project" value="UniProtKB-UniRule"/>
</dbReference>
<dbReference type="GO" id="GO:0048034">
    <property type="term" value="P:heme O biosynthetic process"/>
    <property type="evidence" value="ECO:0007669"/>
    <property type="project" value="UniProtKB-UniRule"/>
</dbReference>
<dbReference type="CDD" id="cd13957">
    <property type="entry name" value="PT_UbiA_Cox10"/>
    <property type="match status" value="1"/>
</dbReference>
<dbReference type="Gene3D" id="1.10.357.140">
    <property type="entry name" value="UbiA prenyltransferase"/>
    <property type="match status" value="1"/>
</dbReference>
<dbReference type="HAMAP" id="MF_00154">
    <property type="entry name" value="CyoE_CtaB"/>
    <property type="match status" value="1"/>
</dbReference>
<dbReference type="InterPro" id="IPR006369">
    <property type="entry name" value="Protohaem_IX_farnesylTrfase"/>
</dbReference>
<dbReference type="InterPro" id="IPR000537">
    <property type="entry name" value="UbiA_prenyltransferase"/>
</dbReference>
<dbReference type="InterPro" id="IPR030470">
    <property type="entry name" value="UbiA_prenylTrfase_CS"/>
</dbReference>
<dbReference type="InterPro" id="IPR044878">
    <property type="entry name" value="UbiA_sf"/>
</dbReference>
<dbReference type="NCBIfam" id="TIGR01473">
    <property type="entry name" value="cyoE_ctaB"/>
    <property type="match status" value="1"/>
</dbReference>
<dbReference type="NCBIfam" id="NF003349">
    <property type="entry name" value="PRK04375.1-2"/>
    <property type="match status" value="1"/>
</dbReference>
<dbReference type="PANTHER" id="PTHR43448:SF7">
    <property type="entry name" value="4-HYDROXYBENZOATE SOLANESYLTRANSFERASE"/>
    <property type="match status" value="1"/>
</dbReference>
<dbReference type="PANTHER" id="PTHR43448">
    <property type="entry name" value="PROTOHEME IX FARNESYLTRANSFERASE, MITOCHONDRIAL"/>
    <property type="match status" value="1"/>
</dbReference>
<dbReference type="Pfam" id="PF01040">
    <property type="entry name" value="UbiA"/>
    <property type="match status" value="1"/>
</dbReference>
<dbReference type="PROSITE" id="PS00943">
    <property type="entry name" value="UBIA"/>
    <property type="match status" value="1"/>
</dbReference>
<organism>
    <name type="scientific">Prochlorococcus marinus (strain MIT 9312)</name>
    <dbReference type="NCBI Taxonomy" id="74546"/>
    <lineage>
        <taxon>Bacteria</taxon>
        <taxon>Bacillati</taxon>
        <taxon>Cyanobacteriota</taxon>
        <taxon>Cyanophyceae</taxon>
        <taxon>Synechococcales</taxon>
        <taxon>Prochlorococcaceae</taxon>
        <taxon>Prochlorococcus</taxon>
    </lineage>
</organism>
<keyword id="KW-0997">Cell inner membrane</keyword>
<keyword id="KW-1003">Cell membrane</keyword>
<keyword id="KW-0350">Heme biosynthesis</keyword>
<keyword id="KW-0472">Membrane</keyword>
<keyword id="KW-0808">Transferase</keyword>
<keyword id="KW-0812">Transmembrane</keyword>
<keyword id="KW-1133">Transmembrane helix</keyword>
<proteinExistence type="inferred from homology"/>
<reference key="1">
    <citation type="journal article" date="2006" name="Science">
        <title>Genomic islands and the ecology and evolution of Prochlorococcus.</title>
        <authorList>
            <person name="Coleman M.L."/>
            <person name="Sullivan M.B."/>
            <person name="Martiny A.C."/>
            <person name="Steglich C."/>
            <person name="Barry K."/>
            <person name="Delong E.F."/>
            <person name="Chisholm S.W."/>
        </authorList>
    </citation>
    <scope>NUCLEOTIDE SEQUENCE [LARGE SCALE GENOMIC DNA]</scope>
    <source>
        <strain>MIT 9312</strain>
    </source>
</reference>
<gene>
    <name evidence="1" type="primary">ctaB</name>
    <name type="ordered locus">PMT9312_0447</name>
</gene>
<evidence type="ECO:0000255" key="1">
    <source>
        <dbReference type="HAMAP-Rule" id="MF_00154"/>
    </source>
</evidence>